<keyword id="KW-0202">Cytokine</keyword>
<keyword id="KW-0963">Cytoplasm</keyword>
<keyword id="KW-1185">Reference proteome</keyword>
<keyword id="KW-0964">Secreted</keyword>
<dbReference type="EMBL" id="AJ276025">
    <property type="protein sequence ID" value="CAC81652.1"/>
    <property type="molecule type" value="mRNA"/>
</dbReference>
<dbReference type="SMR" id="Q8QFQ8"/>
<dbReference type="FunCoup" id="Q8QFQ8">
    <property type="interactions" value="6"/>
</dbReference>
<dbReference type="STRING" id="9031.ENSGALP00000012772"/>
<dbReference type="PaxDb" id="9031-ENSGALP00000012772"/>
<dbReference type="VEuPathDB" id="HostDB:geneid_395312"/>
<dbReference type="eggNOG" id="ENOG502SDJZ">
    <property type="taxonomic scope" value="Eukaryota"/>
</dbReference>
<dbReference type="InParanoid" id="Q8QFQ8"/>
<dbReference type="OrthoDB" id="8535973at2759"/>
<dbReference type="Proteomes" id="UP000000539">
    <property type="component" value="Unassembled WGS sequence"/>
</dbReference>
<dbReference type="GO" id="GO:0005737">
    <property type="term" value="C:cytoplasm"/>
    <property type="evidence" value="ECO:0007669"/>
    <property type="project" value="UniProtKB-SubCell"/>
</dbReference>
<dbReference type="GO" id="GO:0005615">
    <property type="term" value="C:extracellular space"/>
    <property type="evidence" value="ECO:0000318"/>
    <property type="project" value="GO_Central"/>
</dbReference>
<dbReference type="GO" id="GO:0005125">
    <property type="term" value="F:cytokine activity"/>
    <property type="evidence" value="ECO:0000318"/>
    <property type="project" value="GO_Central"/>
</dbReference>
<dbReference type="GO" id="GO:0035710">
    <property type="term" value="P:CD4-positive, alpha-beta T cell activation"/>
    <property type="evidence" value="ECO:0000314"/>
    <property type="project" value="AgBase"/>
</dbReference>
<dbReference type="GO" id="GO:0071222">
    <property type="term" value="P:cellular response to lipopolysaccharide"/>
    <property type="evidence" value="ECO:0000318"/>
    <property type="project" value="GO_Central"/>
</dbReference>
<dbReference type="GO" id="GO:0019221">
    <property type="term" value="P:cytokine-mediated signaling pathway"/>
    <property type="evidence" value="ECO:0000318"/>
    <property type="project" value="GO_Central"/>
</dbReference>
<dbReference type="GO" id="GO:0050830">
    <property type="term" value="P:defense response to Gram-positive bacterium"/>
    <property type="evidence" value="ECO:0000250"/>
    <property type="project" value="UniProtKB"/>
</dbReference>
<dbReference type="GO" id="GO:0061436">
    <property type="term" value="P:establishment of skin barrier"/>
    <property type="evidence" value="ECO:0000250"/>
    <property type="project" value="UniProtKB"/>
</dbReference>
<dbReference type="GO" id="GO:0006955">
    <property type="term" value="P:immune response"/>
    <property type="evidence" value="ECO:0000318"/>
    <property type="project" value="GO_Central"/>
</dbReference>
<dbReference type="GO" id="GO:0006954">
    <property type="term" value="P:inflammatory response"/>
    <property type="evidence" value="ECO:0000318"/>
    <property type="project" value="GO_Central"/>
</dbReference>
<dbReference type="GO" id="GO:0035655">
    <property type="term" value="P:interleukin-18-mediated signaling pathway"/>
    <property type="evidence" value="ECO:0000250"/>
    <property type="project" value="UniProtKB"/>
</dbReference>
<dbReference type="GO" id="GO:0050729">
    <property type="term" value="P:positive regulation of inflammatory response"/>
    <property type="evidence" value="ECO:0000250"/>
    <property type="project" value="UniProtKB"/>
</dbReference>
<dbReference type="GO" id="GO:0050671">
    <property type="term" value="P:positive regulation of lymphocyte proliferation"/>
    <property type="evidence" value="ECO:0000314"/>
    <property type="project" value="AgBase"/>
</dbReference>
<dbReference type="GO" id="GO:0032729">
    <property type="term" value="P:positive regulation of type II interferon production"/>
    <property type="evidence" value="ECO:0000314"/>
    <property type="project" value="AgBase"/>
</dbReference>
<dbReference type="CDD" id="cd23298">
    <property type="entry name" value="beta-trefoil_IL18"/>
    <property type="match status" value="1"/>
</dbReference>
<dbReference type="FunFam" id="2.80.10.50:FF:000066">
    <property type="entry name" value="Interleukin-18"/>
    <property type="match status" value="1"/>
</dbReference>
<dbReference type="Gene3D" id="2.80.10.50">
    <property type="match status" value="1"/>
</dbReference>
<dbReference type="InterPro" id="IPR015529">
    <property type="entry name" value="IL-18"/>
</dbReference>
<dbReference type="InterPro" id="IPR000975">
    <property type="entry name" value="IL-1_fam"/>
</dbReference>
<dbReference type="InterPro" id="IPR008996">
    <property type="entry name" value="IL1/FGF"/>
</dbReference>
<dbReference type="PANTHER" id="PTHR10078">
    <property type="entry name" value="INTERLEUKIN-1 FAMILY MEMBER"/>
    <property type="match status" value="1"/>
</dbReference>
<dbReference type="PANTHER" id="PTHR10078:SF35">
    <property type="entry name" value="INTERLEUKIN-18"/>
    <property type="match status" value="1"/>
</dbReference>
<dbReference type="Pfam" id="PF00340">
    <property type="entry name" value="IL1"/>
    <property type="match status" value="1"/>
</dbReference>
<dbReference type="PIRSF" id="PIRSF015162">
    <property type="entry name" value="Interleukin_18"/>
    <property type="match status" value="1"/>
</dbReference>
<dbReference type="PRINTS" id="PR01933">
    <property type="entry name" value="INTRLEUKIN18"/>
</dbReference>
<dbReference type="SUPFAM" id="SSF50353">
    <property type="entry name" value="Cytokine"/>
    <property type="match status" value="1"/>
</dbReference>
<reference key="1">
    <citation type="submission" date="2000-03" db="EMBL/GenBank/DDBJ databases">
        <title>Cloning and characterisation of chicken interleukin-18.</title>
        <authorList>
            <person name="Rothwell L."/>
            <person name="Buerstedde J.-M."/>
            <person name="Kaiser P."/>
        </authorList>
    </citation>
    <scope>NUCLEOTIDE SEQUENCE [MRNA]</scope>
</reference>
<gene>
    <name type="primary">IL18</name>
</gene>
<sequence>MSCEEIAVCAVRLRENLCLYFEELECDAFCKDKTIKRFFRNVNSQLLVVRPDLNVAAFEDVTDQEVKSGSGMYFDIHCYKTTAPSARMPVAFSVQVEDKSYYMCCEKEHGKMVVRFREGEVPKDIPGESNIIFFKKTFTSCSSKAFKFEYSLEQGMFLAFEEEDSLRKLILKKLPREDEVDETTKFVTSHNERHNL</sequence>
<evidence type="ECO:0000250" key="1">
    <source>
        <dbReference type="UniProtKB" id="Q14116"/>
    </source>
</evidence>
<evidence type="ECO:0000255" key="2"/>
<evidence type="ECO:0000305" key="3"/>
<organism>
    <name type="scientific">Gallus gallus</name>
    <name type="common">Chicken</name>
    <dbReference type="NCBI Taxonomy" id="9031"/>
    <lineage>
        <taxon>Eukaryota</taxon>
        <taxon>Metazoa</taxon>
        <taxon>Chordata</taxon>
        <taxon>Craniata</taxon>
        <taxon>Vertebrata</taxon>
        <taxon>Euteleostomi</taxon>
        <taxon>Archelosauria</taxon>
        <taxon>Archosauria</taxon>
        <taxon>Dinosauria</taxon>
        <taxon>Saurischia</taxon>
        <taxon>Theropoda</taxon>
        <taxon>Coelurosauria</taxon>
        <taxon>Aves</taxon>
        <taxon>Neognathae</taxon>
        <taxon>Galloanserae</taxon>
        <taxon>Galliformes</taxon>
        <taxon>Phasianidae</taxon>
        <taxon>Phasianinae</taxon>
        <taxon>Gallus</taxon>
    </lineage>
</organism>
<name>IL18_CHICK</name>
<accession>Q8QFQ8</accession>
<protein>
    <recommendedName>
        <fullName>Interleukin-18</fullName>
        <shortName>IL-18</shortName>
    </recommendedName>
</protein>
<proteinExistence type="evidence at transcript level"/>
<comment type="function">
    <text evidence="1">Augments natural killer cell activity in spleen cells and stimulates interferon gamma production in T-helper type I cells. Involved in transduction of inflammation downstream of pyroptosis: its mature form is specifically released in the extracellular milieu by passing through the gasdermin-D (GSDMD) pore.</text>
</comment>
<comment type="subunit">
    <text evidence="1">Forms a ternary complex with ligand-binding receptor subunit IL18R1 and signaling receptor subunit IL18RAP at the plasma membrane. Mature IL18 first binds to IL18R1 forming a low affinity binary complex, which then interacts with IL18RAP to form a high affinity ternary complex that signals inside the cell. Interacts with cargo receptor TMED10; the interaction mediates the translocation from the cytoplasm into the ERGIC (endoplasmic reticulum-Golgi intermediate compartment) and thereby secretion.</text>
</comment>
<comment type="subcellular location">
    <subcellularLocation>
        <location evidence="1">Cytoplasm</location>
    </subcellularLocation>
    <subcellularLocation>
        <location evidence="1">Secreted</location>
    </subcellularLocation>
    <text evidence="1">The precursor is cytosolic. In response to inflammasome-activating signals, cleaved and secreted. Mature form is secreted and released in the extracellular milieu by passing through the gasdermin-D (GSDMD) pore. In contrast, the precursor form is not released, due to the presence of an acidic region that is proteolytically removed by CASP1 during maturation. The secretion is dependent on protein unfolding and facilitated by the cargo receptor TMED10.</text>
</comment>
<comment type="PTM">
    <text evidence="1">The pro-IL-18 precursor is processed by CASP1 or CASP4 to yield the active form.</text>
</comment>
<comment type="similarity">
    <text evidence="3">Belongs to the IL-1 family.</text>
</comment>
<feature type="propeptide" id="PRO_0000015351" evidence="2">
    <location>
        <begin position="1"/>
        <end position="29"/>
    </location>
</feature>
<feature type="chain" id="PRO_0000015352" description="Interleukin-18">
    <location>
        <begin position="30"/>
        <end position="196"/>
    </location>
</feature>